<feature type="chain" id="PRO_1000143538" description="ATP synthase subunit beta">
    <location>
        <begin position="1"/>
        <end position="460"/>
    </location>
</feature>
<feature type="binding site" evidence="1">
    <location>
        <begin position="150"/>
        <end position="157"/>
    </location>
    <ligand>
        <name>ATP</name>
        <dbReference type="ChEBI" id="CHEBI:30616"/>
    </ligand>
</feature>
<sequence length="460" mass="50283">MATGKIVQVIGAVVDVEFPQDAVPRVYDALEVQNGNEKLVLEVQQQLGGGIVRTIAMGSSDGLRRGLDVKDLEHPIEVPVGKATLGRIMNVLGEPVDMKGEIGEEERWAIHRAAPSYEELSNSQELLETGIKVIDLMCPFAKGGKVGLFGGAGVGKTVNMMELIRNIAIEHSGYSVFAGVGERTREGNDFYHEMTDSNVIDKVSLVYGQMNEPPGNRLRVALTGLTMAEKFRDEGRDVLLFVDNIYRYTLAGTEVSALLGRMPSAVGYQPTLAEEMGVLQERITSTKTGSITSVQAVYVPADDLTDPSPATTFAHLDATVVLSRQIASLGIYPAVDPLDSTSRQLDPLVVGQEHYDTARGVQSILQRYQELKDIIAILGMDELSEEDKLVVARARKIQRFLSQPFFVAEVFTGSPGKYVSLKDTIRGFKGIMEGEYDHLPEQAFYMVGSIDEAVEKAKKL</sequence>
<dbReference type="EC" id="7.1.2.2" evidence="1"/>
<dbReference type="EMBL" id="CP001144">
    <property type="protein sequence ID" value="ACH77214.1"/>
    <property type="molecule type" value="Genomic_DNA"/>
</dbReference>
<dbReference type="RefSeq" id="WP_000190499.1">
    <property type="nucleotide sequence ID" value="NC_011205.1"/>
</dbReference>
<dbReference type="SMR" id="B5FN33"/>
<dbReference type="GeneID" id="66758154"/>
<dbReference type="KEGG" id="sed:SeD_A4255"/>
<dbReference type="HOGENOM" id="CLU_022398_0_2_6"/>
<dbReference type="Proteomes" id="UP000008322">
    <property type="component" value="Chromosome"/>
</dbReference>
<dbReference type="GO" id="GO:0005886">
    <property type="term" value="C:plasma membrane"/>
    <property type="evidence" value="ECO:0007669"/>
    <property type="project" value="UniProtKB-SubCell"/>
</dbReference>
<dbReference type="GO" id="GO:0045259">
    <property type="term" value="C:proton-transporting ATP synthase complex"/>
    <property type="evidence" value="ECO:0007669"/>
    <property type="project" value="UniProtKB-KW"/>
</dbReference>
<dbReference type="GO" id="GO:0005524">
    <property type="term" value="F:ATP binding"/>
    <property type="evidence" value="ECO:0007669"/>
    <property type="project" value="UniProtKB-UniRule"/>
</dbReference>
<dbReference type="GO" id="GO:0016887">
    <property type="term" value="F:ATP hydrolysis activity"/>
    <property type="evidence" value="ECO:0007669"/>
    <property type="project" value="InterPro"/>
</dbReference>
<dbReference type="GO" id="GO:0046933">
    <property type="term" value="F:proton-transporting ATP synthase activity, rotational mechanism"/>
    <property type="evidence" value="ECO:0007669"/>
    <property type="project" value="UniProtKB-UniRule"/>
</dbReference>
<dbReference type="CDD" id="cd18110">
    <property type="entry name" value="ATP-synt_F1_beta_C"/>
    <property type="match status" value="1"/>
</dbReference>
<dbReference type="CDD" id="cd18115">
    <property type="entry name" value="ATP-synt_F1_beta_N"/>
    <property type="match status" value="1"/>
</dbReference>
<dbReference type="CDD" id="cd01133">
    <property type="entry name" value="F1-ATPase_beta_CD"/>
    <property type="match status" value="1"/>
</dbReference>
<dbReference type="FunFam" id="1.10.1140.10:FF:000001">
    <property type="entry name" value="ATP synthase subunit beta"/>
    <property type="match status" value="1"/>
</dbReference>
<dbReference type="FunFam" id="2.40.10.170:FF:000003">
    <property type="entry name" value="ATP synthase subunit beta"/>
    <property type="match status" value="1"/>
</dbReference>
<dbReference type="FunFam" id="3.40.50.300:FF:000004">
    <property type="entry name" value="ATP synthase subunit beta"/>
    <property type="match status" value="1"/>
</dbReference>
<dbReference type="Gene3D" id="2.40.10.170">
    <property type="match status" value="1"/>
</dbReference>
<dbReference type="Gene3D" id="1.10.1140.10">
    <property type="entry name" value="Bovine Mitochondrial F1-atpase, Atp Synthase Beta Chain, Chain D, domain 3"/>
    <property type="match status" value="1"/>
</dbReference>
<dbReference type="Gene3D" id="3.40.50.300">
    <property type="entry name" value="P-loop containing nucleotide triphosphate hydrolases"/>
    <property type="match status" value="1"/>
</dbReference>
<dbReference type="HAMAP" id="MF_01347">
    <property type="entry name" value="ATP_synth_beta_bact"/>
    <property type="match status" value="1"/>
</dbReference>
<dbReference type="InterPro" id="IPR003593">
    <property type="entry name" value="AAA+_ATPase"/>
</dbReference>
<dbReference type="InterPro" id="IPR055190">
    <property type="entry name" value="ATP-synt_VA_C"/>
</dbReference>
<dbReference type="InterPro" id="IPR005722">
    <property type="entry name" value="ATP_synth_F1_bsu"/>
</dbReference>
<dbReference type="InterPro" id="IPR020003">
    <property type="entry name" value="ATPase_a/bsu_AS"/>
</dbReference>
<dbReference type="InterPro" id="IPR050053">
    <property type="entry name" value="ATPase_alpha/beta_chains"/>
</dbReference>
<dbReference type="InterPro" id="IPR004100">
    <property type="entry name" value="ATPase_F1/V1/A1_a/bsu_N"/>
</dbReference>
<dbReference type="InterPro" id="IPR036121">
    <property type="entry name" value="ATPase_F1/V1/A1_a/bsu_N_sf"/>
</dbReference>
<dbReference type="InterPro" id="IPR000194">
    <property type="entry name" value="ATPase_F1/V1/A1_a/bsu_nucl-bd"/>
</dbReference>
<dbReference type="InterPro" id="IPR024034">
    <property type="entry name" value="ATPase_F1/V1_b/a_C"/>
</dbReference>
<dbReference type="InterPro" id="IPR027417">
    <property type="entry name" value="P-loop_NTPase"/>
</dbReference>
<dbReference type="NCBIfam" id="TIGR01039">
    <property type="entry name" value="atpD"/>
    <property type="match status" value="1"/>
</dbReference>
<dbReference type="PANTHER" id="PTHR15184">
    <property type="entry name" value="ATP SYNTHASE"/>
    <property type="match status" value="1"/>
</dbReference>
<dbReference type="PANTHER" id="PTHR15184:SF71">
    <property type="entry name" value="ATP SYNTHASE SUBUNIT BETA, MITOCHONDRIAL"/>
    <property type="match status" value="1"/>
</dbReference>
<dbReference type="Pfam" id="PF00006">
    <property type="entry name" value="ATP-synt_ab"/>
    <property type="match status" value="1"/>
</dbReference>
<dbReference type="Pfam" id="PF02874">
    <property type="entry name" value="ATP-synt_ab_N"/>
    <property type="match status" value="1"/>
</dbReference>
<dbReference type="Pfam" id="PF22919">
    <property type="entry name" value="ATP-synt_VA_C"/>
    <property type="match status" value="1"/>
</dbReference>
<dbReference type="SMART" id="SM00382">
    <property type="entry name" value="AAA"/>
    <property type="match status" value="1"/>
</dbReference>
<dbReference type="SUPFAM" id="SSF47917">
    <property type="entry name" value="C-terminal domain of alpha and beta subunits of F1 ATP synthase"/>
    <property type="match status" value="1"/>
</dbReference>
<dbReference type="SUPFAM" id="SSF50615">
    <property type="entry name" value="N-terminal domain of alpha and beta subunits of F1 ATP synthase"/>
    <property type="match status" value="1"/>
</dbReference>
<dbReference type="SUPFAM" id="SSF52540">
    <property type="entry name" value="P-loop containing nucleoside triphosphate hydrolases"/>
    <property type="match status" value="1"/>
</dbReference>
<dbReference type="PROSITE" id="PS00152">
    <property type="entry name" value="ATPASE_ALPHA_BETA"/>
    <property type="match status" value="1"/>
</dbReference>
<name>ATPB_SALDC</name>
<reference key="1">
    <citation type="journal article" date="2011" name="J. Bacteriol.">
        <title>Comparative genomics of 28 Salmonella enterica isolates: evidence for CRISPR-mediated adaptive sublineage evolution.</title>
        <authorList>
            <person name="Fricke W.F."/>
            <person name="Mammel M.K."/>
            <person name="McDermott P.F."/>
            <person name="Tartera C."/>
            <person name="White D.G."/>
            <person name="Leclerc J.E."/>
            <person name="Ravel J."/>
            <person name="Cebula T.A."/>
        </authorList>
    </citation>
    <scope>NUCLEOTIDE SEQUENCE [LARGE SCALE GENOMIC DNA]</scope>
    <source>
        <strain>CT_02021853</strain>
    </source>
</reference>
<evidence type="ECO:0000255" key="1">
    <source>
        <dbReference type="HAMAP-Rule" id="MF_01347"/>
    </source>
</evidence>
<gene>
    <name evidence="1" type="primary">atpD</name>
    <name type="ordered locus">SeD_A4255</name>
</gene>
<comment type="function">
    <text evidence="1">Produces ATP from ADP in the presence of a proton gradient across the membrane. The catalytic sites are hosted primarily by the beta subunits.</text>
</comment>
<comment type="catalytic activity">
    <reaction evidence="1">
        <text>ATP + H2O + 4 H(+)(in) = ADP + phosphate + 5 H(+)(out)</text>
        <dbReference type="Rhea" id="RHEA:57720"/>
        <dbReference type="ChEBI" id="CHEBI:15377"/>
        <dbReference type="ChEBI" id="CHEBI:15378"/>
        <dbReference type="ChEBI" id="CHEBI:30616"/>
        <dbReference type="ChEBI" id="CHEBI:43474"/>
        <dbReference type="ChEBI" id="CHEBI:456216"/>
        <dbReference type="EC" id="7.1.2.2"/>
    </reaction>
</comment>
<comment type="subunit">
    <text evidence="1">F-type ATPases have 2 components, CF(1) - the catalytic core - and CF(0) - the membrane proton channel. CF(1) has five subunits: alpha(3), beta(3), gamma(1), delta(1), epsilon(1). CF(0) has three main subunits: a(1), b(2) and c(9-12). The alpha and beta chains form an alternating ring which encloses part of the gamma chain. CF(1) is attached to CF(0) by a central stalk formed by the gamma and epsilon chains, while a peripheral stalk is formed by the delta and b chains.</text>
</comment>
<comment type="subcellular location">
    <subcellularLocation>
        <location evidence="1">Cell inner membrane</location>
        <topology evidence="1">Peripheral membrane protein</topology>
    </subcellularLocation>
</comment>
<comment type="similarity">
    <text evidence="1">Belongs to the ATPase alpha/beta chains family.</text>
</comment>
<accession>B5FN33</accession>
<proteinExistence type="inferred from homology"/>
<protein>
    <recommendedName>
        <fullName evidence="1">ATP synthase subunit beta</fullName>
        <ecNumber evidence="1">7.1.2.2</ecNumber>
    </recommendedName>
    <alternativeName>
        <fullName evidence="1">ATP synthase F1 sector subunit beta</fullName>
    </alternativeName>
    <alternativeName>
        <fullName evidence="1">F-ATPase subunit beta</fullName>
    </alternativeName>
</protein>
<keyword id="KW-0066">ATP synthesis</keyword>
<keyword id="KW-0067">ATP-binding</keyword>
<keyword id="KW-0997">Cell inner membrane</keyword>
<keyword id="KW-1003">Cell membrane</keyword>
<keyword id="KW-0139">CF(1)</keyword>
<keyword id="KW-0375">Hydrogen ion transport</keyword>
<keyword id="KW-0406">Ion transport</keyword>
<keyword id="KW-0472">Membrane</keyword>
<keyword id="KW-0547">Nucleotide-binding</keyword>
<keyword id="KW-1278">Translocase</keyword>
<keyword id="KW-0813">Transport</keyword>
<organism>
    <name type="scientific">Salmonella dublin (strain CT_02021853)</name>
    <dbReference type="NCBI Taxonomy" id="439851"/>
    <lineage>
        <taxon>Bacteria</taxon>
        <taxon>Pseudomonadati</taxon>
        <taxon>Pseudomonadota</taxon>
        <taxon>Gammaproteobacteria</taxon>
        <taxon>Enterobacterales</taxon>
        <taxon>Enterobacteriaceae</taxon>
        <taxon>Salmonella</taxon>
    </lineage>
</organism>